<reference key="1">
    <citation type="journal article" date="2000" name="Proc. Natl. Acad. Sci. U.S.A.">
        <title>Genome sequence of Halobacterium species NRC-1.</title>
        <authorList>
            <person name="Ng W.V."/>
            <person name="Kennedy S.P."/>
            <person name="Mahairas G.G."/>
            <person name="Berquist B."/>
            <person name="Pan M."/>
            <person name="Shukla H.D."/>
            <person name="Lasky S.R."/>
            <person name="Baliga N.S."/>
            <person name="Thorsson V."/>
            <person name="Sbrogna J."/>
            <person name="Swartzell S."/>
            <person name="Weir D."/>
            <person name="Hall J."/>
            <person name="Dahl T.A."/>
            <person name="Welti R."/>
            <person name="Goo Y.A."/>
            <person name="Leithauser B."/>
            <person name="Keller K."/>
            <person name="Cruz R."/>
            <person name="Danson M.J."/>
            <person name="Hough D.W."/>
            <person name="Maddocks D.G."/>
            <person name="Jablonski P.E."/>
            <person name="Krebs M.P."/>
            <person name="Angevine C.M."/>
            <person name="Dale H."/>
            <person name="Isenbarger T.A."/>
            <person name="Peck R.F."/>
            <person name="Pohlschroder M."/>
            <person name="Spudich J.L."/>
            <person name="Jung K.-H."/>
            <person name="Alam M."/>
            <person name="Freitas T."/>
            <person name="Hou S."/>
            <person name="Daniels C.J."/>
            <person name="Dennis P.P."/>
            <person name="Omer A.D."/>
            <person name="Ebhardt H."/>
            <person name="Lowe T.M."/>
            <person name="Liang P."/>
            <person name="Riley M."/>
            <person name="Hood L."/>
            <person name="DasSarma S."/>
        </authorList>
    </citation>
    <scope>NUCLEOTIDE SEQUENCE [LARGE SCALE GENOMIC DNA]</scope>
    <source>
        <strain>ATCC 700922 / JCM 11081 / NRC-1</strain>
    </source>
</reference>
<accession>Q9HMQ2</accession>
<name>ASSY_HALSA</name>
<evidence type="ECO:0000255" key="1">
    <source>
        <dbReference type="HAMAP-Rule" id="MF_00005"/>
    </source>
</evidence>
<dbReference type="EC" id="6.3.4.5" evidence="1"/>
<dbReference type="EMBL" id="AE004437">
    <property type="protein sequence ID" value="AAG20519.1"/>
    <property type="molecule type" value="Genomic_DNA"/>
</dbReference>
<dbReference type="PIR" id="C84394">
    <property type="entry name" value="C84394"/>
</dbReference>
<dbReference type="RefSeq" id="WP_010903821.1">
    <property type="nucleotide sequence ID" value="NC_002607.1"/>
</dbReference>
<dbReference type="SMR" id="Q9HMQ2"/>
<dbReference type="FunCoup" id="Q9HMQ2">
    <property type="interactions" value="163"/>
</dbReference>
<dbReference type="STRING" id="64091.VNG_2437G"/>
<dbReference type="PaxDb" id="64091-VNG_2437G"/>
<dbReference type="KEGG" id="hal:VNG_2437G"/>
<dbReference type="PATRIC" id="fig|64091.14.peg.1887"/>
<dbReference type="HOGENOM" id="CLU_032784_4_0_2"/>
<dbReference type="InParanoid" id="Q9HMQ2"/>
<dbReference type="OrthoDB" id="5877at2157"/>
<dbReference type="PhylomeDB" id="Q9HMQ2"/>
<dbReference type="UniPathway" id="UPA00068">
    <property type="reaction ID" value="UER00113"/>
</dbReference>
<dbReference type="Proteomes" id="UP000000554">
    <property type="component" value="Chromosome"/>
</dbReference>
<dbReference type="GO" id="GO:0005737">
    <property type="term" value="C:cytoplasm"/>
    <property type="evidence" value="ECO:0000318"/>
    <property type="project" value="GO_Central"/>
</dbReference>
<dbReference type="GO" id="GO:0004055">
    <property type="term" value="F:argininosuccinate synthase activity"/>
    <property type="evidence" value="ECO:0000318"/>
    <property type="project" value="GO_Central"/>
</dbReference>
<dbReference type="GO" id="GO:0005524">
    <property type="term" value="F:ATP binding"/>
    <property type="evidence" value="ECO:0007669"/>
    <property type="project" value="UniProtKB-UniRule"/>
</dbReference>
<dbReference type="GO" id="GO:0000053">
    <property type="term" value="P:argininosuccinate metabolic process"/>
    <property type="evidence" value="ECO:0000318"/>
    <property type="project" value="GO_Central"/>
</dbReference>
<dbReference type="GO" id="GO:0006526">
    <property type="term" value="P:L-arginine biosynthetic process"/>
    <property type="evidence" value="ECO:0000318"/>
    <property type="project" value="GO_Central"/>
</dbReference>
<dbReference type="GO" id="GO:0000050">
    <property type="term" value="P:urea cycle"/>
    <property type="evidence" value="ECO:0000318"/>
    <property type="project" value="GO_Central"/>
</dbReference>
<dbReference type="CDD" id="cd01999">
    <property type="entry name" value="ASS"/>
    <property type="match status" value="1"/>
</dbReference>
<dbReference type="FunFam" id="3.90.1260.10:FF:000007">
    <property type="entry name" value="Argininosuccinate synthase"/>
    <property type="match status" value="1"/>
</dbReference>
<dbReference type="Gene3D" id="3.90.1260.10">
    <property type="entry name" value="Argininosuccinate synthetase, chain A, domain 2"/>
    <property type="match status" value="1"/>
</dbReference>
<dbReference type="Gene3D" id="3.40.50.620">
    <property type="entry name" value="HUPs"/>
    <property type="match status" value="1"/>
</dbReference>
<dbReference type="HAMAP" id="MF_00005">
    <property type="entry name" value="Arg_succ_synth_type1"/>
    <property type="match status" value="1"/>
</dbReference>
<dbReference type="InterPro" id="IPR048268">
    <property type="entry name" value="Arginosuc_syn_C"/>
</dbReference>
<dbReference type="InterPro" id="IPR048267">
    <property type="entry name" value="Arginosuc_syn_N"/>
</dbReference>
<dbReference type="InterPro" id="IPR001518">
    <property type="entry name" value="Arginosuc_synth"/>
</dbReference>
<dbReference type="InterPro" id="IPR018223">
    <property type="entry name" value="Arginosuc_synth_CS"/>
</dbReference>
<dbReference type="InterPro" id="IPR023434">
    <property type="entry name" value="Arginosuc_synth_type_1_subfam"/>
</dbReference>
<dbReference type="InterPro" id="IPR024074">
    <property type="entry name" value="AS_cat/multimer_dom_body"/>
</dbReference>
<dbReference type="InterPro" id="IPR014729">
    <property type="entry name" value="Rossmann-like_a/b/a_fold"/>
</dbReference>
<dbReference type="NCBIfam" id="TIGR00032">
    <property type="entry name" value="argG"/>
    <property type="match status" value="1"/>
</dbReference>
<dbReference type="NCBIfam" id="NF001770">
    <property type="entry name" value="PRK00509.1"/>
    <property type="match status" value="1"/>
</dbReference>
<dbReference type="NCBIfam" id="NF010392">
    <property type="entry name" value="PRK13820.1"/>
    <property type="match status" value="1"/>
</dbReference>
<dbReference type="PANTHER" id="PTHR11587">
    <property type="entry name" value="ARGININOSUCCINATE SYNTHASE"/>
    <property type="match status" value="1"/>
</dbReference>
<dbReference type="PANTHER" id="PTHR11587:SF2">
    <property type="entry name" value="ARGININOSUCCINATE SYNTHASE"/>
    <property type="match status" value="1"/>
</dbReference>
<dbReference type="Pfam" id="PF20979">
    <property type="entry name" value="Arginosuc_syn_C"/>
    <property type="match status" value="1"/>
</dbReference>
<dbReference type="Pfam" id="PF00764">
    <property type="entry name" value="Arginosuc_synth"/>
    <property type="match status" value="1"/>
</dbReference>
<dbReference type="SUPFAM" id="SSF52402">
    <property type="entry name" value="Adenine nucleotide alpha hydrolases-like"/>
    <property type="match status" value="1"/>
</dbReference>
<dbReference type="SUPFAM" id="SSF69864">
    <property type="entry name" value="Argininosuccinate synthetase, C-terminal domain"/>
    <property type="match status" value="1"/>
</dbReference>
<dbReference type="PROSITE" id="PS00564">
    <property type="entry name" value="ARGININOSUCCIN_SYN_1"/>
    <property type="match status" value="1"/>
</dbReference>
<dbReference type="PROSITE" id="PS00565">
    <property type="entry name" value="ARGININOSUCCIN_SYN_2"/>
    <property type="match status" value="1"/>
</dbReference>
<gene>
    <name evidence="1" type="primary">argG</name>
    <name type="ordered locus">VNG_2437G</name>
</gene>
<keyword id="KW-0028">Amino-acid biosynthesis</keyword>
<keyword id="KW-0055">Arginine biosynthesis</keyword>
<keyword id="KW-0067">ATP-binding</keyword>
<keyword id="KW-0963">Cytoplasm</keyword>
<keyword id="KW-0436">Ligase</keyword>
<keyword id="KW-0547">Nucleotide-binding</keyword>
<keyword id="KW-1185">Reference proteome</keyword>
<proteinExistence type="inferred from homology"/>
<protein>
    <recommendedName>
        <fullName evidence="1">Argininosuccinate synthase</fullName>
        <ecNumber evidence="1">6.3.4.5</ecNumber>
    </recommendedName>
    <alternativeName>
        <fullName evidence="1">Citrulline--aspartate ligase</fullName>
    </alternativeName>
</protein>
<comment type="catalytic activity">
    <reaction evidence="1">
        <text>L-citrulline + L-aspartate + ATP = 2-(N(omega)-L-arginino)succinate + AMP + diphosphate + H(+)</text>
        <dbReference type="Rhea" id="RHEA:10932"/>
        <dbReference type="ChEBI" id="CHEBI:15378"/>
        <dbReference type="ChEBI" id="CHEBI:29991"/>
        <dbReference type="ChEBI" id="CHEBI:30616"/>
        <dbReference type="ChEBI" id="CHEBI:33019"/>
        <dbReference type="ChEBI" id="CHEBI:57472"/>
        <dbReference type="ChEBI" id="CHEBI:57743"/>
        <dbReference type="ChEBI" id="CHEBI:456215"/>
        <dbReference type="EC" id="6.3.4.5"/>
    </reaction>
</comment>
<comment type="pathway">
    <text evidence="1">Amino-acid biosynthesis; L-arginine biosynthesis; L-arginine from L-ornithine and carbamoyl phosphate: step 2/3.</text>
</comment>
<comment type="subunit">
    <text evidence="1">Homotetramer.</text>
</comment>
<comment type="subcellular location">
    <subcellularLocation>
        <location evidence="1">Cytoplasm</location>
    </subcellularLocation>
</comment>
<comment type="similarity">
    <text evidence="1">Belongs to the argininosuccinate synthase family. Type 1 subfamily.</text>
</comment>
<feature type="chain" id="PRO_0000148673" description="Argininosuccinate synthase">
    <location>
        <begin position="1"/>
        <end position="396"/>
    </location>
</feature>
<feature type="binding site" evidence="1">
    <location>
        <begin position="9"/>
        <end position="17"/>
    </location>
    <ligand>
        <name>ATP</name>
        <dbReference type="ChEBI" id="CHEBI:30616"/>
    </ligand>
</feature>
<feature type="binding site" evidence="1">
    <location>
        <position position="86"/>
    </location>
    <ligand>
        <name>L-citrulline</name>
        <dbReference type="ChEBI" id="CHEBI:57743"/>
    </ligand>
</feature>
<feature type="binding site" evidence="1">
    <location>
        <position position="116"/>
    </location>
    <ligand>
        <name>ATP</name>
        <dbReference type="ChEBI" id="CHEBI:30616"/>
    </ligand>
</feature>
<feature type="binding site" evidence="1">
    <location>
        <position position="118"/>
    </location>
    <ligand>
        <name>L-aspartate</name>
        <dbReference type="ChEBI" id="CHEBI:29991"/>
    </ligand>
</feature>
<feature type="binding site" evidence="1">
    <location>
        <position position="122"/>
    </location>
    <ligand>
        <name>L-aspartate</name>
        <dbReference type="ChEBI" id="CHEBI:29991"/>
    </ligand>
</feature>
<feature type="binding site" evidence="1">
    <location>
        <position position="122"/>
    </location>
    <ligand>
        <name>L-citrulline</name>
        <dbReference type="ChEBI" id="CHEBI:57743"/>
    </ligand>
</feature>
<feature type="binding site" evidence="1">
    <location>
        <position position="123"/>
    </location>
    <ligand>
        <name>L-aspartate</name>
        <dbReference type="ChEBI" id="CHEBI:29991"/>
    </ligand>
</feature>
<feature type="binding site" evidence="1">
    <location>
        <position position="126"/>
    </location>
    <ligand>
        <name>L-citrulline</name>
        <dbReference type="ChEBI" id="CHEBI:57743"/>
    </ligand>
</feature>
<feature type="binding site" evidence="1">
    <location>
        <position position="172"/>
    </location>
    <ligand>
        <name>L-citrulline</name>
        <dbReference type="ChEBI" id="CHEBI:57743"/>
    </ligand>
</feature>
<feature type="binding site" evidence="1">
    <location>
        <position position="181"/>
    </location>
    <ligand>
        <name>L-citrulline</name>
        <dbReference type="ChEBI" id="CHEBI:57743"/>
    </ligand>
</feature>
<feature type="binding site" evidence="1">
    <location>
        <position position="254"/>
    </location>
    <ligand>
        <name>L-citrulline</name>
        <dbReference type="ChEBI" id="CHEBI:57743"/>
    </ligand>
</feature>
<feature type="binding site" evidence="1">
    <location>
        <position position="266"/>
    </location>
    <ligand>
        <name>L-citrulline</name>
        <dbReference type="ChEBI" id="CHEBI:57743"/>
    </ligand>
</feature>
<sequence>MPSGTVALAFSGGLDTTVCVPLLKEEYGYDDVIGVTVDVGQPDAEFAAARETAAALGVEHHVVDATAEFAALCFDAVRANATYQGYPLGTALARPVIADAILSVAEAEGCAALAHGCTGKGNDQLRFEAVWRASDHDVCAPVRELGLTREWEIEYAAERDLPVEAGNEGEWSIDTNLWSRSVEGGHLEEPDYQPPADIYAWTDAPSGETGTVDITFEAGVPVAVDGTAMEPVALIEALNDRAGSYGVGRTDMLEDRMLGLKVRENYEHPAATTLLAAHKALEGLVLTKAERDFTAAVSQQWAQKAYEGVVEHPLMDALNGYLDETQSAVSGTVTIAFEGGRARPIARESEHAVYSADAASFNTETVAGIEQADATGVAKYHGFQSRLANAAFDGNK</sequence>
<organism>
    <name type="scientific">Halobacterium salinarum (strain ATCC 700922 / JCM 11081 / NRC-1)</name>
    <name type="common">Halobacterium halobium</name>
    <dbReference type="NCBI Taxonomy" id="64091"/>
    <lineage>
        <taxon>Archaea</taxon>
        <taxon>Methanobacteriati</taxon>
        <taxon>Methanobacteriota</taxon>
        <taxon>Stenosarchaea group</taxon>
        <taxon>Halobacteria</taxon>
        <taxon>Halobacteriales</taxon>
        <taxon>Halobacteriaceae</taxon>
        <taxon>Halobacterium</taxon>
        <taxon>Halobacterium salinarum NRC-34001</taxon>
    </lineage>
</organism>